<sequence>MTDILNCTKSEEIFSAAQELMPGGVSSPVRAFKSVGGQPIVFDRVKGPFAWDIDGNRYIDYIGSWGPAICGHAHPEVTTALQEAIEKGTSFGAPCVLENKLAEMVIDAVPSVEMVRFVNSGTEACMAVLRLMRAFTGRDKVIKFDGCYHGHADMFLVKAGSGVATLGLPDSPGVPRTTTANTLTAPYNDLEAVKKLFSENPDAISGVILEPIVGNAGFITPEPGFLEGLRELTTENGSLLVFDEVMTGFRISYGGAQEKFGVTPDLTTLGKVIGGGLPVGAYGGKKEIMSMVAPSGPVYQAGTLSGNPLAMTAGIKTLELLKQEGTYEKLDAITSRLIEGIIQSAENNGIAIYGGSVSAMFGFFLCDGPVRNFDEAKTNDAKLFGKLHREMLRRGVYLAPSPFEAGFTSLAHNEEEIDKTIEVFDQCFNTIKNQ</sequence>
<organism>
    <name type="scientific">Prochlorococcus marinus (strain MIT 9312)</name>
    <dbReference type="NCBI Taxonomy" id="74546"/>
    <lineage>
        <taxon>Bacteria</taxon>
        <taxon>Bacillati</taxon>
        <taxon>Cyanobacteriota</taxon>
        <taxon>Cyanophyceae</taxon>
        <taxon>Synechococcales</taxon>
        <taxon>Prochlorococcaceae</taxon>
        <taxon>Prochlorococcus</taxon>
    </lineage>
</organism>
<reference key="1">
    <citation type="journal article" date="2006" name="Science">
        <title>Genomic islands and the ecology and evolution of Prochlorococcus.</title>
        <authorList>
            <person name="Coleman M.L."/>
            <person name="Sullivan M.B."/>
            <person name="Martiny A.C."/>
            <person name="Steglich C."/>
            <person name="Barry K."/>
            <person name="Delong E.F."/>
            <person name="Chisholm S.W."/>
        </authorList>
    </citation>
    <scope>NUCLEOTIDE SEQUENCE [LARGE SCALE GENOMIC DNA]</scope>
    <source>
        <strain>MIT 9312</strain>
    </source>
</reference>
<evidence type="ECO:0000255" key="1">
    <source>
        <dbReference type="HAMAP-Rule" id="MF_00375"/>
    </source>
</evidence>
<comment type="catalytic activity">
    <reaction evidence="1">
        <text>(S)-4-amino-5-oxopentanoate = 5-aminolevulinate</text>
        <dbReference type="Rhea" id="RHEA:14265"/>
        <dbReference type="ChEBI" id="CHEBI:57501"/>
        <dbReference type="ChEBI" id="CHEBI:356416"/>
        <dbReference type="EC" id="5.4.3.8"/>
    </reaction>
</comment>
<comment type="cofactor">
    <cofactor evidence="1">
        <name>pyridoxal 5'-phosphate</name>
        <dbReference type="ChEBI" id="CHEBI:597326"/>
    </cofactor>
</comment>
<comment type="pathway">
    <text evidence="1">Porphyrin-containing compound metabolism; protoporphyrin-IX biosynthesis; 5-aminolevulinate from L-glutamyl-tRNA(Glu): step 2/2.</text>
</comment>
<comment type="pathway">
    <text evidence="1">Porphyrin-containing compound metabolism; chlorophyll biosynthesis.</text>
</comment>
<comment type="subunit">
    <text evidence="1">Homodimer.</text>
</comment>
<comment type="subcellular location">
    <subcellularLocation>
        <location evidence="1">Cytoplasm</location>
    </subcellularLocation>
</comment>
<comment type="similarity">
    <text evidence="1">Belongs to the class-III pyridoxal-phosphate-dependent aminotransferase family. HemL subfamily.</text>
</comment>
<protein>
    <recommendedName>
        <fullName evidence="1">Glutamate-1-semialdehyde 2,1-aminomutase</fullName>
        <shortName evidence="1">GSA</shortName>
        <ecNumber evidence="1">5.4.3.8</ecNumber>
    </recommendedName>
    <alternativeName>
        <fullName evidence="1">Glutamate-1-semialdehyde aminotransferase</fullName>
        <shortName evidence="1">GSA-AT</shortName>
    </alternativeName>
</protein>
<gene>
    <name evidence="1" type="primary">hemL</name>
    <name type="ordered locus">PMT9312_0484</name>
</gene>
<accession>Q31C50</accession>
<keyword id="KW-0149">Chlorophyll biosynthesis</keyword>
<keyword id="KW-0963">Cytoplasm</keyword>
<keyword id="KW-0413">Isomerase</keyword>
<keyword id="KW-0627">Porphyrin biosynthesis</keyword>
<keyword id="KW-0663">Pyridoxal phosphate</keyword>
<dbReference type="EC" id="5.4.3.8" evidence="1"/>
<dbReference type="EMBL" id="CP000111">
    <property type="protein sequence ID" value="ABB49545.1"/>
    <property type="molecule type" value="Genomic_DNA"/>
</dbReference>
<dbReference type="RefSeq" id="WP_011376043.1">
    <property type="nucleotide sequence ID" value="NC_007577.1"/>
</dbReference>
<dbReference type="SMR" id="Q31C50"/>
<dbReference type="STRING" id="74546.PMT9312_0484"/>
<dbReference type="KEGG" id="pmi:PMT9312_0484"/>
<dbReference type="eggNOG" id="COG0001">
    <property type="taxonomic scope" value="Bacteria"/>
</dbReference>
<dbReference type="HOGENOM" id="CLU_016922_1_5_3"/>
<dbReference type="OrthoDB" id="9807885at2"/>
<dbReference type="UniPathway" id="UPA00251">
    <property type="reaction ID" value="UER00317"/>
</dbReference>
<dbReference type="UniPathway" id="UPA00668"/>
<dbReference type="Proteomes" id="UP000002715">
    <property type="component" value="Chromosome"/>
</dbReference>
<dbReference type="GO" id="GO:0005737">
    <property type="term" value="C:cytoplasm"/>
    <property type="evidence" value="ECO:0007669"/>
    <property type="project" value="UniProtKB-SubCell"/>
</dbReference>
<dbReference type="GO" id="GO:0042286">
    <property type="term" value="F:glutamate-1-semialdehyde 2,1-aminomutase activity"/>
    <property type="evidence" value="ECO:0007669"/>
    <property type="project" value="UniProtKB-UniRule"/>
</dbReference>
<dbReference type="GO" id="GO:0030170">
    <property type="term" value="F:pyridoxal phosphate binding"/>
    <property type="evidence" value="ECO:0007669"/>
    <property type="project" value="InterPro"/>
</dbReference>
<dbReference type="GO" id="GO:0008483">
    <property type="term" value="F:transaminase activity"/>
    <property type="evidence" value="ECO:0007669"/>
    <property type="project" value="InterPro"/>
</dbReference>
<dbReference type="GO" id="GO:0015995">
    <property type="term" value="P:chlorophyll biosynthetic process"/>
    <property type="evidence" value="ECO:0007669"/>
    <property type="project" value="UniProtKB-UniRule"/>
</dbReference>
<dbReference type="GO" id="GO:0006782">
    <property type="term" value="P:protoporphyrinogen IX biosynthetic process"/>
    <property type="evidence" value="ECO:0007669"/>
    <property type="project" value="UniProtKB-UniRule"/>
</dbReference>
<dbReference type="CDD" id="cd00610">
    <property type="entry name" value="OAT_like"/>
    <property type="match status" value="1"/>
</dbReference>
<dbReference type="FunFam" id="3.40.640.10:FF:000021">
    <property type="entry name" value="Glutamate-1-semialdehyde 2,1-aminomutase"/>
    <property type="match status" value="1"/>
</dbReference>
<dbReference type="Gene3D" id="3.90.1150.10">
    <property type="entry name" value="Aspartate Aminotransferase, domain 1"/>
    <property type="match status" value="1"/>
</dbReference>
<dbReference type="Gene3D" id="3.40.640.10">
    <property type="entry name" value="Type I PLP-dependent aspartate aminotransferase-like (Major domain)"/>
    <property type="match status" value="1"/>
</dbReference>
<dbReference type="HAMAP" id="MF_00375">
    <property type="entry name" value="HemL_aminotrans_3"/>
    <property type="match status" value="1"/>
</dbReference>
<dbReference type="InterPro" id="IPR004639">
    <property type="entry name" value="4pyrrol_synth_GluAld_NH2Trfase"/>
</dbReference>
<dbReference type="InterPro" id="IPR005814">
    <property type="entry name" value="Aminotrans_3"/>
</dbReference>
<dbReference type="InterPro" id="IPR049704">
    <property type="entry name" value="Aminotrans_3_PPA_site"/>
</dbReference>
<dbReference type="InterPro" id="IPR015424">
    <property type="entry name" value="PyrdxlP-dep_Trfase"/>
</dbReference>
<dbReference type="InterPro" id="IPR015421">
    <property type="entry name" value="PyrdxlP-dep_Trfase_major"/>
</dbReference>
<dbReference type="InterPro" id="IPR015422">
    <property type="entry name" value="PyrdxlP-dep_Trfase_small"/>
</dbReference>
<dbReference type="NCBIfam" id="TIGR00713">
    <property type="entry name" value="hemL"/>
    <property type="match status" value="1"/>
</dbReference>
<dbReference type="NCBIfam" id="NF000818">
    <property type="entry name" value="PRK00062.1"/>
    <property type="match status" value="1"/>
</dbReference>
<dbReference type="PANTHER" id="PTHR43713">
    <property type="entry name" value="GLUTAMATE-1-SEMIALDEHYDE 2,1-AMINOMUTASE"/>
    <property type="match status" value="1"/>
</dbReference>
<dbReference type="PANTHER" id="PTHR43713:SF3">
    <property type="entry name" value="GLUTAMATE-1-SEMIALDEHYDE 2,1-AMINOMUTASE 1, CHLOROPLASTIC-RELATED"/>
    <property type="match status" value="1"/>
</dbReference>
<dbReference type="Pfam" id="PF00202">
    <property type="entry name" value="Aminotran_3"/>
    <property type="match status" value="1"/>
</dbReference>
<dbReference type="SUPFAM" id="SSF53383">
    <property type="entry name" value="PLP-dependent transferases"/>
    <property type="match status" value="1"/>
</dbReference>
<dbReference type="PROSITE" id="PS00600">
    <property type="entry name" value="AA_TRANSFER_CLASS_3"/>
    <property type="match status" value="1"/>
</dbReference>
<name>GSA_PROM9</name>
<feature type="chain" id="PRO_0000243597" description="Glutamate-1-semialdehyde 2,1-aminomutase">
    <location>
        <begin position="1"/>
        <end position="434"/>
    </location>
</feature>
<feature type="modified residue" description="N6-(pyridoxal phosphate)lysine" evidence="1">
    <location>
        <position position="271"/>
    </location>
</feature>
<proteinExistence type="inferred from homology"/>